<protein>
    <recommendedName>
        <fullName>Hypoxia-inducible factor 1-alpha</fullName>
        <shortName>HIF-1-alpha</shortName>
        <shortName>HIF1-alpha</shortName>
    </recommendedName>
</protein>
<reference key="1">
    <citation type="journal article" date="1999" name="Biochim. Biophys. Acta">
        <title>Molecular cloning of cDNAs encoding hypoxia-inducible factor (HIF)-1alpha and -2alpha of bovine arterial endothelial cells.</title>
        <authorList>
            <person name="Hara S."/>
            <person name="Kobayashi C."/>
            <person name="Imura N."/>
        </authorList>
    </citation>
    <scope>NUCLEOTIDE SEQUENCE [MRNA]</scope>
    <source>
        <tissue>Artery</tissue>
    </source>
</reference>
<evidence type="ECO:0000250" key="1">
    <source>
        <dbReference type="UniProtKB" id="Q16665"/>
    </source>
</evidence>
<evidence type="ECO:0000250" key="2">
    <source>
        <dbReference type="UniProtKB" id="Q61221"/>
    </source>
</evidence>
<evidence type="ECO:0000255" key="3"/>
<evidence type="ECO:0000255" key="4">
    <source>
        <dbReference type="PROSITE-ProRule" id="PRU00140"/>
    </source>
</evidence>
<evidence type="ECO:0000255" key="5">
    <source>
        <dbReference type="PROSITE-ProRule" id="PRU00981"/>
    </source>
</evidence>
<evidence type="ECO:0000256" key="6">
    <source>
        <dbReference type="SAM" id="MobiDB-lite"/>
    </source>
</evidence>
<comment type="function">
    <text evidence="1 2">Functions as a master transcriptional regulator of the adaptive response to hypoxia. Under hypoxic conditions, activates the transcription of over 40 genes, including erythropoietin, glucose transporters, glycolytic enzymes, vascular endothelial growth factor, HILPDA, and other genes whose protein products increase oxygen delivery or facilitate metabolic adaptation to hypoxia. Plays an essential role in embryonic vascularization, tumor angiogenesis and pathophysiology of ischemic disease (By similarity). Heterodimerizes with ARNT; heterodimer binds to core DNA sequence 5'-TACGTG-3' within the hypoxia response element (HRE) of target gene promoters (By similarity). Activation requires recruitment of transcriptional coactivators such as CREBBP and EP300. Activity is enhanced by interaction with NCOA1 and/or NCOA2. Interaction with redox regulatory protein APEX1 seems to activate CTAD and potentiates activation by NCOA1 and CREBBP. Involved in the axonal distribution and transport of mitochondria in neurons during hypoxia (By similarity).</text>
</comment>
<comment type="activity regulation">
    <text evidence="1">Induced by reactive oxygen species (ROS).</text>
</comment>
<comment type="subunit">
    <text evidence="1 2">Interacts with the ARNT; forms a heterodimer that binds core DNA sequence 5'-TACGTG-3' within the hypoxia response element (HRE) of target gene promoters (By similarity). Interacts with COPS5; the interaction increases the transcriptional activity of HIF1A through increased stability (By similarity). Interacts with EP300 (via TAZ-type 1 domains); the interaction is stimulated in response to hypoxia and inhibited by CITED2. Interacts with CREBBP (via TAZ-type 1 domains). Interacts with NCOA1, NCOA2, APEX1 and HSP90. Interacts (hydroxylated within the ODD domain) with VHLL (via beta domain); the interaction, leads to polyubiquitination and subsequent HIF1A proteasomal degradation. During hypoxia, sumoylated HIF1A also binds VHL; the interaction promotes the ubiquitination of HIF1A (By similarity). Interacts with SENP1; the interaction desumoylates HIF1A resulting in stabilization and activation of transcription (By similarity). Interacts (via the ODD domain) with NAA10; the interaction appears not to acetylate HIF1A nor have any affect on protein stability, during hypoxia. Interacts with RWDD3; the interaction enhances HIF1A sumoylation (By similarity). Interacts with TSGA10. Interacts with HIF3A (By similarity). Interacts with RORA (via the DNA binding domain); the interaction enhances HIF1A transcription under hypoxia through increasing protein stability. Interaction with PSMA7 inhibits the transactivation activity of HIF1A under both normoxic and hypoxia-mimicking conditions. Interacts with USP20. Interacts with RACK1; promotes HIF1A ubiquitination and proteasome-mediated degradation. Interacts (via N-terminus) with USP19. Interacts with SIRT2. Interacts (deacetylated form) with EGLN1. Interacts with CBFA2T3. Interacts with HSP90AA1 and HSP90AB1. Interacts with DCUN1D1; this interaction increases the interaction between VHL and DCUN1D1. Interacts with HIF1AN (By similarity).</text>
</comment>
<comment type="subcellular location">
    <subcellularLocation>
        <location evidence="1">Cytoplasm</location>
    </subcellularLocation>
    <subcellularLocation>
        <location evidence="2">Nucleus</location>
    </subcellularLocation>
    <text evidence="1 2">Colocalizes with HIF3A in the nucleus and speckles (By similarity). Cytoplasmic in normoxia, nuclear translocation in response to hypoxia (By similarity).</text>
</comment>
<comment type="domain">
    <text evidence="1">Contains two independent C-terminal transactivation domains, NTAD and CTAD, which function synergistically. Their transcriptional activity is repressed by an intervening inhibitory domain (ID) (By similarity).</text>
</comment>
<comment type="PTM">
    <text evidence="1">S-nitrosylation of Cys-797 may be responsible for increased recruitment of p300 coactivator necessary for transcriptional activity of HIF-1 complex.</text>
</comment>
<comment type="PTM">
    <text evidence="1">Acetylation of Lys-532 by ARD1 increases interaction with VHL and stimulates subsequent proteasomal degradation. Deacetylation of Lys-706 by SIRT2 increases its interaction with and hydroxylation by EGLN1 thereby inactivating HIF1A activity by inducing its proteasomal degradation (By similarity).</text>
</comment>
<comment type="PTM">
    <text evidence="1">Ubiquitinated; in normoxia, following hydroxylation and interaction with VHL. Lys-532 appears to be the principal site of ubiquitination. Clioquinol, the Cu/Zn-chelator, inhibits ubiquitination through preventing hydroxylation at Asn-800. Ubiquitinated by E3 ligase VHL. Deubiquitinated by UCHL1 (By similarity).</text>
</comment>
<comment type="PTM">
    <text evidence="1 2">Requires phosphorylation for DNA-binding. Phosphorylation at Ser-247 by CSNK1D/CK1 represses kinase activity and impairs ARNT binding. Phosphorylation by GSK3-beta and PLK3 promote degradation by the proteasome (By similarity).</text>
</comment>
<comment type="PTM">
    <text evidence="1">The iron and 2-oxoglutarate dependent 3-hydroxylation of asparagine is (S) stereospecific within HIF CTAD domains.</text>
</comment>
<comment type="PTM">
    <text evidence="1 2">Sumoylated; with SUMO1 under hypoxia. Sumoylation is enhanced through interaction with RWDD3. Both sumoylation and desumoylation seem to be involved in the regulation of its stability during hypoxia. Sumoylation can promote either its stabilization or its VHL-dependent degradation by promoting hydroxyproline-independent HIF1A-VHL complex binding, thus leading to HIF1A ubiquitination and proteasomal degradation. Desumoylation by SENP1 increases its stability amd transcriptional activity. There is a disaccord between various publications on the effect of sumoylation and desumoylation on its stability and transcriptional activity (By similarity).</text>
</comment>
<comment type="PTM">
    <text evidence="1">In normoxia, is hydroxylated on Pro-402 and Pro-564 in the oxygen-dependent degradation domain (ODD) by EGLN1/PHD2 and EGLN2/PHD1. EGLN3/PHD3 has also been shown to hydroxylate Pro-564. The hydroxylated prolines promote interaction with VHL, initiating rapid ubiquitination and subsequent proteasomal degradation. Deubiquitinated by USP20. Under hypoxia, proline hydroxylation is impaired and ubiquitination is attenuated, resulting in stabilization (By similarity). In normoxia, is hydroxylated on Asn-800 by HIF1AN, thus abrogating interaction with CREBBP and EP300 and preventing transcriptional activation. Repressed by iron ion, via Fe(2+) prolyl hydroxylase (PHD) enzymes-mediated hydroxylation and subsequent proteasomal degradation.</text>
</comment>
<sequence length="823" mass="92128">MEGAGGANDKKKISSERRKEKSRDAARSRRSKESEVFYELAHQLPLPHNVSSHLDKASVMRLTISYLRVRKLLDAGDLDIEDEMKAQMNCFYLKALDGFVMVLTDDGDMIYISDNVNKYMGLTQFELTGHSVFDFTHPCDHEEMREMLTHRNGLVKKGKEQNTQRSFFLRMKCTLTSRGRTMNIKSATWKVLHCTGHIHVYDTNSNQSQCGYKKPPMTCLVLICEPIPHPSNIEIPLDSKTFLSRHSLDMKFSYCDERITELMGYEPEELLGRSIYEYYHALDSDHLTKTHHDMFTKGQVTTGQYRMLAKRGGYVWIETQATVIYNTKNSQPQCIVCVNYVVSGIIQHDLIFSLQQTECVLKPVESSDMKMTQLFTKVESEDTSSLFDKLKKEPDALTLLAPAAGDTIISLDFGSNDTETDDQQLEEVPLYNDVMLPSSNEKLQNINLAMSPLPASETPKPLRSSADPALNQEVALKLEPNPESLELSFTMPQIQDQPASPSDGSTRQSSPEPNSPSEYCFDVDSDMVNEFKLELVEKLFAEDTEAKNPFSTQDTDLDLEMLAPYIPMDDDFQLRSFDQLSPLENSSTSPQSASTNTVFQPTQMQKPPIATVTTTATSDELKTVTKDGMEDIKILIAFPSPPHVPKEPPCATTSPYSDTGSRTASPNRAGKGVIEQTEKSHPRSPNVLSVALSQRTTAPEEELNPKILALQNAQRKRKIEHDGSLFQAVGIGTLLQQPDDRATTTSLSWKRVKGCKSSEQNGMEQKTIILIPSDLACRLLGQSMDESGLPQLTSYDCEVNAPIQGSRNLLQGEELLRALDQVN</sequence>
<proteinExistence type="evidence at transcript level"/>
<keyword id="KW-0007">Acetylation</keyword>
<keyword id="KW-0010">Activator</keyword>
<keyword id="KW-0963">Cytoplasm</keyword>
<keyword id="KW-0238">DNA-binding</keyword>
<keyword id="KW-0379">Hydroxylation</keyword>
<keyword id="KW-1017">Isopeptide bond</keyword>
<keyword id="KW-0539">Nucleus</keyword>
<keyword id="KW-0597">Phosphoprotein</keyword>
<keyword id="KW-1185">Reference proteome</keyword>
<keyword id="KW-0677">Repeat</keyword>
<keyword id="KW-0702">S-nitrosylation</keyword>
<keyword id="KW-0804">Transcription</keyword>
<keyword id="KW-0805">Transcription regulation</keyword>
<keyword id="KW-0832">Ubl conjugation</keyword>
<organism>
    <name type="scientific">Bos taurus</name>
    <name type="common">Bovine</name>
    <dbReference type="NCBI Taxonomy" id="9913"/>
    <lineage>
        <taxon>Eukaryota</taxon>
        <taxon>Metazoa</taxon>
        <taxon>Chordata</taxon>
        <taxon>Craniata</taxon>
        <taxon>Vertebrata</taxon>
        <taxon>Euteleostomi</taxon>
        <taxon>Mammalia</taxon>
        <taxon>Eutheria</taxon>
        <taxon>Laurasiatheria</taxon>
        <taxon>Artiodactyla</taxon>
        <taxon>Ruminantia</taxon>
        <taxon>Pecora</taxon>
        <taxon>Bovidae</taxon>
        <taxon>Bovinae</taxon>
        <taxon>Bos</taxon>
    </lineage>
</organism>
<accession>Q9XTA5</accession>
<name>HIF1A_BOVIN</name>
<dbReference type="EMBL" id="AB018398">
    <property type="protein sequence ID" value="BAA78675.1"/>
    <property type="molecule type" value="mRNA"/>
</dbReference>
<dbReference type="SMR" id="Q9XTA5"/>
<dbReference type="FunCoup" id="Q9XTA5">
    <property type="interactions" value="933"/>
</dbReference>
<dbReference type="STRING" id="9913.ENSBTAP00000027885"/>
<dbReference type="PaxDb" id="9913-ENSBTAP00000027885"/>
<dbReference type="eggNOG" id="KOG3558">
    <property type="taxonomic scope" value="Eukaryota"/>
</dbReference>
<dbReference type="InParanoid" id="Q9XTA5"/>
<dbReference type="OrthoDB" id="6021714at2759"/>
<dbReference type="Proteomes" id="UP000009136">
    <property type="component" value="Unplaced"/>
</dbReference>
<dbReference type="GO" id="GO:1904115">
    <property type="term" value="C:axon cytoplasm"/>
    <property type="evidence" value="ECO:0007669"/>
    <property type="project" value="GOC"/>
</dbReference>
<dbReference type="GO" id="GO:0005829">
    <property type="term" value="C:cytosol"/>
    <property type="evidence" value="ECO:0000250"/>
    <property type="project" value="UniProtKB"/>
</dbReference>
<dbReference type="GO" id="GO:0016607">
    <property type="term" value="C:nuclear speck"/>
    <property type="evidence" value="ECO:0000250"/>
    <property type="project" value="UniProtKB"/>
</dbReference>
<dbReference type="GO" id="GO:0005634">
    <property type="term" value="C:nucleus"/>
    <property type="evidence" value="ECO:0000314"/>
    <property type="project" value="UniProtKB"/>
</dbReference>
<dbReference type="GO" id="GO:0003700">
    <property type="term" value="F:DNA-binding transcription factor activity"/>
    <property type="evidence" value="ECO:0000250"/>
    <property type="project" value="UniProtKB"/>
</dbReference>
<dbReference type="GO" id="GO:0000981">
    <property type="term" value="F:DNA-binding transcription factor activity, RNA polymerase II-specific"/>
    <property type="evidence" value="ECO:0000318"/>
    <property type="project" value="GO_Central"/>
</dbReference>
<dbReference type="GO" id="GO:0046982">
    <property type="term" value="F:protein heterodimerization activity"/>
    <property type="evidence" value="ECO:0000250"/>
    <property type="project" value="UniProtKB"/>
</dbReference>
<dbReference type="GO" id="GO:0000977">
    <property type="term" value="F:RNA polymerase II transcription regulatory region sequence-specific DNA binding"/>
    <property type="evidence" value="ECO:0000318"/>
    <property type="project" value="GO_Central"/>
</dbReference>
<dbReference type="GO" id="GO:0043565">
    <property type="term" value="F:sequence-specific DNA binding"/>
    <property type="evidence" value="ECO:0000250"/>
    <property type="project" value="UniProtKB"/>
</dbReference>
<dbReference type="GO" id="GO:0001223">
    <property type="term" value="F:transcription coactivator binding"/>
    <property type="evidence" value="ECO:0000250"/>
    <property type="project" value="UniProtKB"/>
</dbReference>
<dbReference type="GO" id="GO:0019896">
    <property type="term" value="P:axonal transport of mitochondrion"/>
    <property type="evidence" value="ECO:0000250"/>
    <property type="project" value="UniProtKB"/>
</dbReference>
<dbReference type="GO" id="GO:0071456">
    <property type="term" value="P:cellular response to hypoxia"/>
    <property type="evidence" value="ECO:0000250"/>
    <property type="project" value="UniProtKB"/>
</dbReference>
<dbReference type="GO" id="GO:0001678">
    <property type="term" value="P:intracellular glucose homeostasis"/>
    <property type="evidence" value="ECO:0000250"/>
    <property type="project" value="UniProtKB"/>
</dbReference>
<dbReference type="GO" id="GO:1900017">
    <property type="term" value="P:positive regulation of cytokine production involved in inflammatory response"/>
    <property type="evidence" value="ECO:0000250"/>
    <property type="project" value="UniProtKB"/>
</dbReference>
<dbReference type="GO" id="GO:0045893">
    <property type="term" value="P:positive regulation of DNA-templated transcription"/>
    <property type="evidence" value="ECO:0000250"/>
    <property type="project" value="UniProtKB"/>
</dbReference>
<dbReference type="GO" id="GO:0045944">
    <property type="term" value="P:positive regulation of transcription by RNA polymerase II"/>
    <property type="evidence" value="ECO:0000250"/>
    <property type="project" value="UniProtKB"/>
</dbReference>
<dbReference type="GO" id="GO:0010575">
    <property type="term" value="P:positive regulation of vascular endothelial growth factor production"/>
    <property type="evidence" value="ECO:0000250"/>
    <property type="project" value="UniProtKB"/>
</dbReference>
<dbReference type="GO" id="GO:0010468">
    <property type="term" value="P:regulation of gene expression"/>
    <property type="evidence" value="ECO:0000250"/>
    <property type="project" value="UniProtKB"/>
</dbReference>
<dbReference type="GO" id="GO:0006110">
    <property type="term" value="P:regulation of glycolytic process"/>
    <property type="evidence" value="ECO:0000250"/>
    <property type="project" value="UniProtKB"/>
</dbReference>
<dbReference type="GO" id="GO:2000434">
    <property type="term" value="P:regulation of protein neddylation"/>
    <property type="evidence" value="ECO:0000250"/>
    <property type="project" value="UniProtKB"/>
</dbReference>
<dbReference type="GO" id="GO:0006357">
    <property type="term" value="P:regulation of transcription by RNA polymerase II"/>
    <property type="evidence" value="ECO:0000318"/>
    <property type="project" value="GO_Central"/>
</dbReference>
<dbReference type="GO" id="GO:0001666">
    <property type="term" value="P:response to hypoxia"/>
    <property type="evidence" value="ECO:0000250"/>
    <property type="project" value="UniProtKB"/>
</dbReference>
<dbReference type="GO" id="GO:0000302">
    <property type="term" value="P:response to reactive oxygen species"/>
    <property type="evidence" value="ECO:0000250"/>
    <property type="project" value="UniProtKB"/>
</dbReference>
<dbReference type="CDD" id="cd19727">
    <property type="entry name" value="bHLH-PAS_HIF1a_PASD8"/>
    <property type="match status" value="1"/>
</dbReference>
<dbReference type="CDD" id="cd00130">
    <property type="entry name" value="PAS"/>
    <property type="match status" value="2"/>
</dbReference>
<dbReference type="FunFam" id="3.30.450.20:FF:000005">
    <property type="entry name" value="Hypoxia-inducible factor 1 subunit alpha"/>
    <property type="match status" value="1"/>
</dbReference>
<dbReference type="FunFam" id="3.30.450.20:FF:000015">
    <property type="entry name" value="Hypoxia-inducible factor 1-alpha isoform 1"/>
    <property type="match status" value="1"/>
</dbReference>
<dbReference type="FunFam" id="4.10.280.10:FF:000076">
    <property type="entry name" value="hypoxia-inducible factor 3-alpha isoform X1"/>
    <property type="match status" value="1"/>
</dbReference>
<dbReference type="Gene3D" id="4.10.280.10">
    <property type="entry name" value="Helix-loop-helix DNA-binding domain"/>
    <property type="match status" value="1"/>
</dbReference>
<dbReference type="Gene3D" id="3.30.450.20">
    <property type="entry name" value="PAS domain"/>
    <property type="match status" value="2"/>
</dbReference>
<dbReference type="InterPro" id="IPR011598">
    <property type="entry name" value="bHLH_dom"/>
</dbReference>
<dbReference type="InterPro" id="IPR001321">
    <property type="entry name" value="HIF-1_alpha"/>
</dbReference>
<dbReference type="InterPro" id="IPR014887">
    <property type="entry name" value="HIF-1_CTAD"/>
</dbReference>
<dbReference type="InterPro" id="IPR021537">
    <property type="entry name" value="HIF_alpha-like"/>
</dbReference>
<dbReference type="InterPro" id="IPR036638">
    <property type="entry name" value="HLH_DNA-bd_sf"/>
</dbReference>
<dbReference type="InterPro" id="IPR001610">
    <property type="entry name" value="PAC"/>
</dbReference>
<dbReference type="InterPro" id="IPR000014">
    <property type="entry name" value="PAS"/>
</dbReference>
<dbReference type="InterPro" id="IPR035965">
    <property type="entry name" value="PAS-like_dom_sf"/>
</dbReference>
<dbReference type="InterPro" id="IPR013767">
    <property type="entry name" value="PAS_fold"/>
</dbReference>
<dbReference type="InterPro" id="IPR013655">
    <property type="entry name" value="PAS_fold_3"/>
</dbReference>
<dbReference type="NCBIfam" id="TIGR00229">
    <property type="entry name" value="sensory_box"/>
    <property type="match status" value="2"/>
</dbReference>
<dbReference type="PANTHER" id="PTHR23043">
    <property type="entry name" value="HYPOXIA-INDUCIBLE FACTOR 1 ALPHA"/>
    <property type="match status" value="1"/>
</dbReference>
<dbReference type="PANTHER" id="PTHR23043:SF7">
    <property type="entry name" value="HYPOXIA-INDUCIBLE FACTOR 1-ALPHA"/>
    <property type="match status" value="1"/>
</dbReference>
<dbReference type="Pfam" id="PF23171">
    <property type="entry name" value="bHLH_HIF1A"/>
    <property type="match status" value="1"/>
</dbReference>
<dbReference type="Pfam" id="PF11413">
    <property type="entry name" value="HIF-1"/>
    <property type="match status" value="1"/>
</dbReference>
<dbReference type="Pfam" id="PF08778">
    <property type="entry name" value="HIF-1a_CTAD"/>
    <property type="match status" value="1"/>
</dbReference>
<dbReference type="Pfam" id="PF00989">
    <property type="entry name" value="PAS"/>
    <property type="match status" value="1"/>
</dbReference>
<dbReference type="Pfam" id="PF08447">
    <property type="entry name" value="PAS_3"/>
    <property type="match status" value="1"/>
</dbReference>
<dbReference type="PRINTS" id="PR01080">
    <property type="entry name" value="HYPOXIAIF1A"/>
</dbReference>
<dbReference type="SMART" id="SM00353">
    <property type="entry name" value="HLH"/>
    <property type="match status" value="1"/>
</dbReference>
<dbReference type="SMART" id="SM00086">
    <property type="entry name" value="PAC"/>
    <property type="match status" value="1"/>
</dbReference>
<dbReference type="SMART" id="SM00091">
    <property type="entry name" value="PAS"/>
    <property type="match status" value="2"/>
</dbReference>
<dbReference type="SUPFAM" id="SSF47459">
    <property type="entry name" value="HLH, helix-loop-helix DNA-binding domain"/>
    <property type="match status" value="1"/>
</dbReference>
<dbReference type="SUPFAM" id="SSF55785">
    <property type="entry name" value="PYP-like sensor domain (PAS domain)"/>
    <property type="match status" value="2"/>
</dbReference>
<dbReference type="PROSITE" id="PS50888">
    <property type="entry name" value="BHLH"/>
    <property type="match status" value="1"/>
</dbReference>
<dbReference type="PROSITE" id="PS50112">
    <property type="entry name" value="PAS"/>
    <property type="match status" value="2"/>
</dbReference>
<feature type="chain" id="PRO_0000127219" description="Hypoxia-inducible factor 1-alpha">
    <location>
        <begin position="1"/>
        <end position="823"/>
    </location>
</feature>
<feature type="domain" description="bHLH" evidence="5">
    <location>
        <begin position="17"/>
        <end position="70"/>
    </location>
</feature>
<feature type="domain" description="PAS 1" evidence="4">
    <location>
        <begin position="85"/>
        <end position="158"/>
    </location>
</feature>
<feature type="domain" description="PAS 2" evidence="4">
    <location>
        <begin position="228"/>
        <end position="298"/>
    </location>
</feature>
<feature type="domain" description="PAC">
    <location>
        <begin position="302"/>
        <end position="345"/>
    </location>
</feature>
<feature type="region of interest" description="Interaction with TSGA10" evidence="2">
    <location>
        <begin position="1"/>
        <end position="401"/>
    </location>
</feature>
<feature type="region of interest" description="Disordered" evidence="6">
    <location>
        <begin position="1"/>
        <end position="30"/>
    </location>
</feature>
<feature type="region of interest" description="DNA-binding" evidence="2">
    <location>
        <begin position="21"/>
        <end position="30"/>
    </location>
</feature>
<feature type="region of interest" description="Required for heterodimer formation with ARNT" evidence="2">
    <location>
        <begin position="170"/>
        <end position="191"/>
    </location>
</feature>
<feature type="region of interest" description="ODD">
    <location>
        <begin position="401"/>
        <end position="600"/>
    </location>
</feature>
<feature type="region of interest" description="Disordered" evidence="6">
    <location>
        <begin position="494"/>
        <end position="521"/>
    </location>
</feature>
<feature type="region of interest" description="NTAD">
    <location>
        <begin position="531"/>
        <end position="575"/>
    </location>
</feature>
<feature type="region of interest" description="ID">
    <location>
        <begin position="576"/>
        <end position="782"/>
    </location>
</feature>
<feature type="region of interest" description="Disordered" evidence="6">
    <location>
        <begin position="581"/>
        <end position="602"/>
    </location>
</feature>
<feature type="region of interest" description="Disordered" evidence="6">
    <location>
        <begin position="639"/>
        <end position="685"/>
    </location>
</feature>
<feature type="region of interest" description="CTAD">
    <location>
        <begin position="783"/>
        <end position="823"/>
    </location>
</feature>
<feature type="short sequence motif" description="Nuclear localization signal" evidence="3">
    <location>
        <begin position="715"/>
        <end position="721"/>
    </location>
</feature>
<feature type="compositionally biased region" description="Basic and acidic residues" evidence="6">
    <location>
        <begin position="8"/>
        <end position="30"/>
    </location>
</feature>
<feature type="compositionally biased region" description="Polar residues" evidence="6">
    <location>
        <begin position="494"/>
        <end position="517"/>
    </location>
</feature>
<feature type="compositionally biased region" description="Polar residues" evidence="6">
    <location>
        <begin position="651"/>
        <end position="666"/>
    </location>
</feature>
<feature type="modified residue" description="Phosphoserine; by CK1" evidence="1">
    <location>
        <position position="247"/>
    </location>
</feature>
<feature type="modified residue" description="4-hydroxyproline" evidence="1">
    <location>
        <position position="402"/>
    </location>
</feature>
<feature type="modified residue" description="N6-acetyllysine; alternate" evidence="1">
    <location>
        <position position="532"/>
    </location>
</feature>
<feature type="modified residue" description="Phosphoserine; by GSK3-beta" evidence="1">
    <location>
        <position position="551"/>
    </location>
</feature>
<feature type="modified residue" description="Phosphothreonine; by GSK3-beta" evidence="1">
    <location>
        <position position="555"/>
    </location>
</feature>
<feature type="modified residue" description="4-hydroxyproline" evidence="1">
    <location>
        <position position="564"/>
    </location>
</feature>
<feature type="modified residue" description="Phosphoserine; by PLK3" evidence="1">
    <location>
        <position position="576"/>
    </location>
</feature>
<feature type="modified residue" description="Phosphoserine; by GSK3-beta" evidence="1">
    <location>
        <position position="589"/>
    </location>
</feature>
<feature type="modified residue" description="Phosphoserine; by PLK3" evidence="1">
    <location>
        <position position="654"/>
    </location>
</feature>
<feature type="modified residue" description="N6-acetyllysine" evidence="1">
    <location>
        <position position="706"/>
    </location>
</feature>
<feature type="modified residue" description="S-nitrosocysteine" evidence="1">
    <location>
        <position position="797"/>
    </location>
</feature>
<feature type="modified residue" description="(3S)-3-hydroxyasparagine" evidence="1">
    <location>
        <position position="800"/>
    </location>
</feature>
<feature type="cross-link" description="Glycyl lysine isopeptide (Lys-Gly) (interchain with G-Cter in ubiquitin); alternate" evidence="1">
    <location>
        <position position="532"/>
    </location>
</feature>
<feature type="cross-link" description="Glycyl lysine isopeptide (Lys-Gly) (interchain with G-Cter in ubiquitin)" evidence="1">
    <location>
        <position position="538"/>
    </location>
</feature>
<feature type="cross-link" description="Glycyl lysine isopeptide (Lys-Gly) (interchain with G-Cter in ubiquitin)" evidence="1">
    <location>
        <position position="547"/>
    </location>
</feature>
<gene>
    <name type="primary">HIF1A</name>
</gene>